<keyword id="KW-0687">Ribonucleoprotein</keyword>
<keyword id="KW-0689">Ribosomal protein</keyword>
<keyword id="KW-0694">RNA-binding</keyword>
<keyword id="KW-0699">rRNA-binding</keyword>
<evidence type="ECO:0000255" key="1">
    <source>
        <dbReference type="HAMAP-Rule" id="MF_01337"/>
    </source>
</evidence>
<evidence type="ECO:0000305" key="2"/>
<accession>A9BG02</accession>
<protein>
    <recommendedName>
        <fullName evidence="1">Large ribosomal subunit protein uL18</fullName>
    </recommendedName>
    <alternativeName>
        <fullName evidence="2">50S ribosomal protein L18</fullName>
    </alternativeName>
</protein>
<name>RL18_PETMO</name>
<proteinExistence type="inferred from homology"/>
<feature type="chain" id="PRO_1000086676" description="Large ribosomal subunit protein uL18">
    <location>
        <begin position="1"/>
        <end position="122"/>
    </location>
</feature>
<organism>
    <name type="scientific">Petrotoga mobilis (strain DSM 10674 / SJ95)</name>
    <dbReference type="NCBI Taxonomy" id="403833"/>
    <lineage>
        <taxon>Bacteria</taxon>
        <taxon>Thermotogati</taxon>
        <taxon>Thermotogota</taxon>
        <taxon>Thermotogae</taxon>
        <taxon>Petrotogales</taxon>
        <taxon>Petrotogaceae</taxon>
        <taxon>Petrotoga</taxon>
    </lineage>
</organism>
<comment type="function">
    <text evidence="1">This is one of the proteins that bind and probably mediate the attachment of the 5S RNA into the large ribosomal subunit, where it forms part of the central protuberance.</text>
</comment>
<comment type="subunit">
    <text evidence="1">Part of the 50S ribosomal subunit; part of the 5S rRNA/L5/L18/L25 subcomplex. Contacts the 5S and 23S rRNAs.</text>
</comment>
<comment type="similarity">
    <text evidence="1">Belongs to the universal ribosomal protein uL18 family.</text>
</comment>
<sequence length="122" mass="13923">MIKQLDKKALRQKRHLRVRKNVRGTSEKPRLTVFKSQKHIYAQIIDDTKGVTLASASTTQKQLKEKLEKTWDENAAKEVGKLIAEKAKEKGITEIVFDRSGYKYHGKVKALAEAARETGLKF</sequence>
<gene>
    <name evidence="1" type="primary">rplR</name>
    <name type="ordered locus">Pmob_0774</name>
</gene>
<dbReference type="EMBL" id="CP000879">
    <property type="protein sequence ID" value="ABX31498.1"/>
    <property type="molecule type" value="Genomic_DNA"/>
</dbReference>
<dbReference type="RefSeq" id="WP_012208601.1">
    <property type="nucleotide sequence ID" value="NC_010003.1"/>
</dbReference>
<dbReference type="SMR" id="A9BG02"/>
<dbReference type="STRING" id="403833.Pmob_0774"/>
<dbReference type="KEGG" id="pmo:Pmob_0774"/>
<dbReference type="eggNOG" id="COG0256">
    <property type="taxonomic scope" value="Bacteria"/>
</dbReference>
<dbReference type="HOGENOM" id="CLU_098841_0_1_0"/>
<dbReference type="OrthoDB" id="9810939at2"/>
<dbReference type="Proteomes" id="UP000000789">
    <property type="component" value="Chromosome"/>
</dbReference>
<dbReference type="GO" id="GO:0022625">
    <property type="term" value="C:cytosolic large ribosomal subunit"/>
    <property type="evidence" value="ECO:0007669"/>
    <property type="project" value="TreeGrafter"/>
</dbReference>
<dbReference type="GO" id="GO:0008097">
    <property type="term" value="F:5S rRNA binding"/>
    <property type="evidence" value="ECO:0007669"/>
    <property type="project" value="TreeGrafter"/>
</dbReference>
<dbReference type="GO" id="GO:0003735">
    <property type="term" value="F:structural constituent of ribosome"/>
    <property type="evidence" value="ECO:0007669"/>
    <property type="project" value="InterPro"/>
</dbReference>
<dbReference type="GO" id="GO:0006412">
    <property type="term" value="P:translation"/>
    <property type="evidence" value="ECO:0007669"/>
    <property type="project" value="UniProtKB-UniRule"/>
</dbReference>
<dbReference type="CDD" id="cd00432">
    <property type="entry name" value="Ribosomal_L18_L5e"/>
    <property type="match status" value="1"/>
</dbReference>
<dbReference type="FunFam" id="3.30.420.100:FF:000001">
    <property type="entry name" value="50S ribosomal protein L18"/>
    <property type="match status" value="1"/>
</dbReference>
<dbReference type="Gene3D" id="3.30.420.100">
    <property type="match status" value="1"/>
</dbReference>
<dbReference type="HAMAP" id="MF_01337_B">
    <property type="entry name" value="Ribosomal_uL18_B"/>
    <property type="match status" value="1"/>
</dbReference>
<dbReference type="InterPro" id="IPR004389">
    <property type="entry name" value="Ribosomal_uL18_bac-type"/>
</dbReference>
<dbReference type="InterPro" id="IPR005484">
    <property type="entry name" value="Ribosomal_uL18_bac/euk"/>
</dbReference>
<dbReference type="NCBIfam" id="TIGR00060">
    <property type="entry name" value="L18_bact"/>
    <property type="match status" value="1"/>
</dbReference>
<dbReference type="PANTHER" id="PTHR12899">
    <property type="entry name" value="39S RIBOSOMAL PROTEIN L18, MITOCHONDRIAL"/>
    <property type="match status" value="1"/>
</dbReference>
<dbReference type="PANTHER" id="PTHR12899:SF3">
    <property type="entry name" value="LARGE RIBOSOMAL SUBUNIT PROTEIN UL18M"/>
    <property type="match status" value="1"/>
</dbReference>
<dbReference type="Pfam" id="PF00861">
    <property type="entry name" value="Ribosomal_L18p"/>
    <property type="match status" value="1"/>
</dbReference>
<dbReference type="SUPFAM" id="SSF53137">
    <property type="entry name" value="Translational machinery components"/>
    <property type="match status" value="1"/>
</dbReference>
<reference key="1">
    <citation type="submission" date="2007-11" db="EMBL/GenBank/DDBJ databases">
        <title>Complete sequence of Petroga mobilis SJ95.</title>
        <authorList>
            <consortium name="US DOE Joint Genome Institute"/>
            <person name="Copeland A."/>
            <person name="Lucas S."/>
            <person name="Lapidus A."/>
            <person name="Barry K."/>
            <person name="Glavina del Rio T."/>
            <person name="Dalin E."/>
            <person name="Tice H."/>
            <person name="Pitluck S."/>
            <person name="Meincke L."/>
            <person name="Brettin T."/>
            <person name="Bruce D."/>
            <person name="Detter J.C."/>
            <person name="Han C."/>
            <person name="Kuske C.R."/>
            <person name="Schmutz J."/>
            <person name="Larimer F."/>
            <person name="Land M."/>
            <person name="Hauser L."/>
            <person name="Kyrpides N."/>
            <person name="Mikhailova N."/>
            <person name="Noll K."/>
            <person name="Richardson P."/>
        </authorList>
    </citation>
    <scope>NUCLEOTIDE SEQUENCE [LARGE SCALE GENOMIC DNA]</scope>
    <source>
        <strain>DSM 10674 / SJ95</strain>
    </source>
</reference>